<keyword id="KW-0067">ATP-binding</keyword>
<keyword id="KW-0143">Chaperone</keyword>
<keyword id="KW-0963">Cytoplasm</keyword>
<keyword id="KW-0547">Nucleotide-binding</keyword>
<keyword id="KW-0346">Stress response</keyword>
<comment type="function">
    <text evidence="1">ATPase subunit of a proteasome-like degradation complex; this subunit has chaperone activity. The binding of ATP and its subsequent hydrolysis by HslU are essential for unfolding of protein substrates subsequently hydrolyzed by HslV. HslU recognizes the N-terminal part of its protein substrates and unfolds these before they are guided to HslV for hydrolysis.</text>
</comment>
<comment type="subunit">
    <text evidence="1">A double ring-shaped homohexamer of HslV is capped on each side by a ring-shaped HslU homohexamer. The assembly of the HslU/HslV complex is dependent on binding of ATP.</text>
</comment>
<comment type="subcellular location">
    <subcellularLocation>
        <location evidence="1">Cytoplasm</location>
    </subcellularLocation>
</comment>
<comment type="induction">
    <text evidence="1">By heat shock.</text>
</comment>
<comment type="similarity">
    <text evidence="1">Belongs to the ClpX chaperone family. HslU subfamily.</text>
</comment>
<feature type="chain" id="PRO_1000119103" description="ATP-dependent protease ATPase subunit HslU">
    <location>
        <begin position="1"/>
        <end position="443"/>
    </location>
</feature>
<feature type="binding site" evidence="1">
    <location>
        <position position="18"/>
    </location>
    <ligand>
        <name>ATP</name>
        <dbReference type="ChEBI" id="CHEBI:30616"/>
    </ligand>
</feature>
<feature type="binding site" evidence="1">
    <location>
        <begin position="60"/>
        <end position="65"/>
    </location>
    <ligand>
        <name>ATP</name>
        <dbReference type="ChEBI" id="CHEBI:30616"/>
    </ligand>
</feature>
<feature type="binding site" evidence="1">
    <location>
        <position position="256"/>
    </location>
    <ligand>
        <name>ATP</name>
        <dbReference type="ChEBI" id="CHEBI:30616"/>
    </ligand>
</feature>
<feature type="binding site" evidence="1">
    <location>
        <position position="321"/>
    </location>
    <ligand>
        <name>ATP</name>
        <dbReference type="ChEBI" id="CHEBI:30616"/>
    </ligand>
</feature>
<feature type="binding site" evidence="1">
    <location>
        <position position="393"/>
    </location>
    <ligand>
        <name>ATP</name>
        <dbReference type="ChEBI" id="CHEBI:30616"/>
    </ligand>
</feature>
<evidence type="ECO:0000255" key="1">
    <source>
        <dbReference type="HAMAP-Rule" id="MF_00249"/>
    </source>
</evidence>
<protein>
    <recommendedName>
        <fullName evidence="1">ATP-dependent protease ATPase subunit HslU</fullName>
    </recommendedName>
    <alternativeName>
        <fullName evidence="1">Heat shock protein HslU</fullName>
    </alternativeName>
    <alternativeName>
        <fullName evidence="1">Unfoldase HslU</fullName>
    </alternativeName>
</protein>
<proteinExistence type="inferred from homology"/>
<accession>B7NU74</accession>
<gene>
    <name evidence="1" type="primary">hslU</name>
    <name type="ordered locus">ECIAI39_3063</name>
</gene>
<name>HSLU_ECO7I</name>
<sequence>MSEMTPREIVSELDKHIIGQDNAKRSVAIALRNRWRRMQLNEELRHEVTPKNILMIGPTGVGKTEIARRLAKLANAPFIKVEATKFTEVGYVGKEVDSIIRDLTDAAVKMVRVQAIEKNRYRAEELAEERILDVLIPPAKNNWGQTEQQQEPSAARQAFRKKLREGQLDDKEIEIDLAAAPMGVEIMAPPGMEEMTSQLQSMFQNLGGQKQKARKLKIKDAMKLLIEEEAAKLVNPEELKQDAIDAVEQHGIVFIDEIDKICKRGESSGPDVSREGVQRDLLPLVEGCTVSTKHGMVKTDHILFIASGAFQIAKPSDLIPELQGRLPIRVELQALTTSDFERILTEPNASITVQYKALMATEGVNIEFTDSGIKRIAEAAWQVNESTENIGARRLHTVLERLMEEISYDASDLSGQTITIDADYVSKHLDALVADEDLSRFIL</sequence>
<dbReference type="EMBL" id="CU928164">
    <property type="protein sequence ID" value="CAR19182.1"/>
    <property type="molecule type" value="Genomic_DNA"/>
</dbReference>
<dbReference type="RefSeq" id="WP_001293344.1">
    <property type="nucleotide sequence ID" value="NC_011750.1"/>
</dbReference>
<dbReference type="RefSeq" id="YP_002408993.1">
    <property type="nucleotide sequence ID" value="NC_011750.1"/>
</dbReference>
<dbReference type="SMR" id="B7NU74"/>
<dbReference type="STRING" id="585057.ECIAI39_3063"/>
<dbReference type="KEGG" id="ect:ECIAI39_3063"/>
<dbReference type="PATRIC" id="fig|585057.6.peg.3176"/>
<dbReference type="HOGENOM" id="CLU_033123_0_0_6"/>
<dbReference type="Proteomes" id="UP000000749">
    <property type="component" value="Chromosome"/>
</dbReference>
<dbReference type="GO" id="GO:0009376">
    <property type="term" value="C:HslUV protease complex"/>
    <property type="evidence" value="ECO:0007669"/>
    <property type="project" value="UniProtKB-UniRule"/>
</dbReference>
<dbReference type="GO" id="GO:0005524">
    <property type="term" value="F:ATP binding"/>
    <property type="evidence" value="ECO:0007669"/>
    <property type="project" value="UniProtKB-UniRule"/>
</dbReference>
<dbReference type="GO" id="GO:0016887">
    <property type="term" value="F:ATP hydrolysis activity"/>
    <property type="evidence" value="ECO:0007669"/>
    <property type="project" value="InterPro"/>
</dbReference>
<dbReference type="GO" id="GO:0008233">
    <property type="term" value="F:peptidase activity"/>
    <property type="evidence" value="ECO:0007669"/>
    <property type="project" value="InterPro"/>
</dbReference>
<dbReference type="GO" id="GO:0036402">
    <property type="term" value="F:proteasome-activating activity"/>
    <property type="evidence" value="ECO:0007669"/>
    <property type="project" value="UniProtKB-UniRule"/>
</dbReference>
<dbReference type="GO" id="GO:0043335">
    <property type="term" value="P:protein unfolding"/>
    <property type="evidence" value="ECO:0007669"/>
    <property type="project" value="UniProtKB-UniRule"/>
</dbReference>
<dbReference type="GO" id="GO:0051603">
    <property type="term" value="P:proteolysis involved in protein catabolic process"/>
    <property type="evidence" value="ECO:0007669"/>
    <property type="project" value="TreeGrafter"/>
</dbReference>
<dbReference type="CDD" id="cd19498">
    <property type="entry name" value="RecA-like_HslU"/>
    <property type="match status" value="1"/>
</dbReference>
<dbReference type="FunFam" id="1.10.8.10:FF:000012">
    <property type="entry name" value="ATP-dependent protease ATPase subunit HslU"/>
    <property type="match status" value="1"/>
</dbReference>
<dbReference type="FunFam" id="1.10.8.10:FF:000028">
    <property type="entry name" value="ATP-dependent protease ATPase subunit HslU"/>
    <property type="match status" value="1"/>
</dbReference>
<dbReference type="FunFam" id="1.10.8.60:FF:000027">
    <property type="entry name" value="ATP-dependent protease ATPase subunit HslU"/>
    <property type="match status" value="1"/>
</dbReference>
<dbReference type="FunFam" id="3.40.50.300:FF:000213">
    <property type="entry name" value="ATP-dependent protease ATPase subunit HslU"/>
    <property type="match status" value="1"/>
</dbReference>
<dbReference type="FunFam" id="3.40.50.300:FF:000220">
    <property type="entry name" value="ATP-dependent protease ATPase subunit HslU"/>
    <property type="match status" value="1"/>
</dbReference>
<dbReference type="Gene3D" id="1.10.8.60">
    <property type="match status" value="1"/>
</dbReference>
<dbReference type="Gene3D" id="1.10.8.10">
    <property type="entry name" value="DNA helicase RuvA subunit, C-terminal domain"/>
    <property type="match status" value="2"/>
</dbReference>
<dbReference type="Gene3D" id="3.40.50.300">
    <property type="entry name" value="P-loop containing nucleotide triphosphate hydrolases"/>
    <property type="match status" value="1"/>
</dbReference>
<dbReference type="HAMAP" id="MF_00249">
    <property type="entry name" value="HslU"/>
    <property type="match status" value="1"/>
</dbReference>
<dbReference type="InterPro" id="IPR003593">
    <property type="entry name" value="AAA+_ATPase"/>
</dbReference>
<dbReference type="InterPro" id="IPR050052">
    <property type="entry name" value="ATP-dep_Clp_protease_ClpX"/>
</dbReference>
<dbReference type="InterPro" id="IPR003959">
    <property type="entry name" value="ATPase_AAA_core"/>
</dbReference>
<dbReference type="InterPro" id="IPR019489">
    <property type="entry name" value="Clp_ATPase_C"/>
</dbReference>
<dbReference type="InterPro" id="IPR004491">
    <property type="entry name" value="HslU"/>
</dbReference>
<dbReference type="InterPro" id="IPR027417">
    <property type="entry name" value="P-loop_NTPase"/>
</dbReference>
<dbReference type="NCBIfam" id="TIGR00390">
    <property type="entry name" value="hslU"/>
    <property type="match status" value="1"/>
</dbReference>
<dbReference type="NCBIfam" id="NF003544">
    <property type="entry name" value="PRK05201.1"/>
    <property type="match status" value="1"/>
</dbReference>
<dbReference type="PANTHER" id="PTHR48102">
    <property type="entry name" value="ATP-DEPENDENT CLP PROTEASE ATP-BINDING SUBUNIT CLPX-LIKE, MITOCHONDRIAL-RELATED"/>
    <property type="match status" value="1"/>
</dbReference>
<dbReference type="PANTHER" id="PTHR48102:SF3">
    <property type="entry name" value="ATP-DEPENDENT PROTEASE ATPASE SUBUNIT HSLU"/>
    <property type="match status" value="1"/>
</dbReference>
<dbReference type="Pfam" id="PF00004">
    <property type="entry name" value="AAA"/>
    <property type="match status" value="1"/>
</dbReference>
<dbReference type="Pfam" id="PF07724">
    <property type="entry name" value="AAA_2"/>
    <property type="match status" value="1"/>
</dbReference>
<dbReference type="SMART" id="SM00382">
    <property type="entry name" value="AAA"/>
    <property type="match status" value="1"/>
</dbReference>
<dbReference type="SMART" id="SM01086">
    <property type="entry name" value="ClpB_D2-small"/>
    <property type="match status" value="1"/>
</dbReference>
<dbReference type="SUPFAM" id="SSF52540">
    <property type="entry name" value="P-loop containing nucleoside triphosphate hydrolases"/>
    <property type="match status" value="1"/>
</dbReference>
<reference key="1">
    <citation type="journal article" date="2009" name="PLoS Genet.">
        <title>Organised genome dynamics in the Escherichia coli species results in highly diverse adaptive paths.</title>
        <authorList>
            <person name="Touchon M."/>
            <person name="Hoede C."/>
            <person name="Tenaillon O."/>
            <person name="Barbe V."/>
            <person name="Baeriswyl S."/>
            <person name="Bidet P."/>
            <person name="Bingen E."/>
            <person name="Bonacorsi S."/>
            <person name="Bouchier C."/>
            <person name="Bouvet O."/>
            <person name="Calteau A."/>
            <person name="Chiapello H."/>
            <person name="Clermont O."/>
            <person name="Cruveiller S."/>
            <person name="Danchin A."/>
            <person name="Diard M."/>
            <person name="Dossat C."/>
            <person name="Karoui M.E."/>
            <person name="Frapy E."/>
            <person name="Garry L."/>
            <person name="Ghigo J.M."/>
            <person name="Gilles A.M."/>
            <person name="Johnson J."/>
            <person name="Le Bouguenec C."/>
            <person name="Lescat M."/>
            <person name="Mangenot S."/>
            <person name="Martinez-Jehanne V."/>
            <person name="Matic I."/>
            <person name="Nassif X."/>
            <person name="Oztas S."/>
            <person name="Petit M.A."/>
            <person name="Pichon C."/>
            <person name="Rouy Z."/>
            <person name="Ruf C.S."/>
            <person name="Schneider D."/>
            <person name="Tourret J."/>
            <person name="Vacherie B."/>
            <person name="Vallenet D."/>
            <person name="Medigue C."/>
            <person name="Rocha E.P.C."/>
            <person name="Denamur E."/>
        </authorList>
    </citation>
    <scope>NUCLEOTIDE SEQUENCE [LARGE SCALE GENOMIC DNA]</scope>
    <source>
        <strain>IAI39 / ExPEC</strain>
    </source>
</reference>
<organism>
    <name type="scientific">Escherichia coli O7:K1 (strain IAI39 / ExPEC)</name>
    <dbReference type="NCBI Taxonomy" id="585057"/>
    <lineage>
        <taxon>Bacteria</taxon>
        <taxon>Pseudomonadati</taxon>
        <taxon>Pseudomonadota</taxon>
        <taxon>Gammaproteobacteria</taxon>
        <taxon>Enterobacterales</taxon>
        <taxon>Enterobacteriaceae</taxon>
        <taxon>Escherichia</taxon>
    </lineage>
</organism>